<evidence type="ECO:0000255" key="1">
    <source>
        <dbReference type="HAMAP-Rule" id="MF_00735"/>
    </source>
</evidence>
<gene>
    <name evidence="1" type="primary">prmA</name>
    <name type="ordered locus">JJD26997_0604</name>
</gene>
<organism>
    <name type="scientific">Campylobacter jejuni subsp. doylei (strain ATCC BAA-1458 / RM4099 / 269.97)</name>
    <dbReference type="NCBI Taxonomy" id="360109"/>
    <lineage>
        <taxon>Bacteria</taxon>
        <taxon>Pseudomonadati</taxon>
        <taxon>Campylobacterota</taxon>
        <taxon>Epsilonproteobacteria</taxon>
        <taxon>Campylobacterales</taxon>
        <taxon>Campylobacteraceae</taxon>
        <taxon>Campylobacter</taxon>
    </lineage>
</organism>
<dbReference type="EC" id="2.1.1.-" evidence="1"/>
<dbReference type="EMBL" id="CP000768">
    <property type="protein sequence ID" value="ABS43619.1"/>
    <property type="molecule type" value="Genomic_DNA"/>
</dbReference>
<dbReference type="SMR" id="A7H2P1"/>
<dbReference type="KEGG" id="cjd:JJD26997_0604"/>
<dbReference type="HOGENOM" id="CLU_049382_1_0_7"/>
<dbReference type="Proteomes" id="UP000002302">
    <property type="component" value="Chromosome"/>
</dbReference>
<dbReference type="GO" id="GO:0005737">
    <property type="term" value="C:cytoplasm"/>
    <property type="evidence" value="ECO:0007669"/>
    <property type="project" value="UniProtKB-SubCell"/>
</dbReference>
<dbReference type="GO" id="GO:0016279">
    <property type="term" value="F:protein-lysine N-methyltransferase activity"/>
    <property type="evidence" value="ECO:0007669"/>
    <property type="project" value="RHEA"/>
</dbReference>
<dbReference type="GO" id="GO:0032259">
    <property type="term" value="P:methylation"/>
    <property type="evidence" value="ECO:0007669"/>
    <property type="project" value="UniProtKB-KW"/>
</dbReference>
<dbReference type="CDD" id="cd02440">
    <property type="entry name" value="AdoMet_MTases"/>
    <property type="match status" value="1"/>
</dbReference>
<dbReference type="Gene3D" id="3.40.50.150">
    <property type="entry name" value="Vaccinia Virus protein VP39"/>
    <property type="match status" value="1"/>
</dbReference>
<dbReference type="HAMAP" id="MF_00735">
    <property type="entry name" value="Methyltr_PrmA"/>
    <property type="match status" value="1"/>
</dbReference>
<dbReference type="InterPro" id="IPR050078">
    <property type="entry name" value="Ribosomal_L11_MeTrfase_PrmA"/>
</dbReference>
<dbReference type="InterPro" id="IPR004498">
    <property type="entry name" value="Ribosomal_PrmA_MeTrfase"/>
</dbReference>
<dbReference type="InterPro" id="IPR029063">
    <property type="entry name" value="SAM-dependent_MTases_sf"/>
</dbReference>
<dbReference type="NCBIfam" id="NF001786">
    <property type="entry name" value="PRK00517.2-4"/>
    <property type="match status" value="1"/>
</dbReference>
<dbReference type="PANTHER" id="PTHR43648">
    <property type="entry name" value="ELECTRON TRANSFER FLAVOPROTEIN BETA SUBUNIT LYSINE METHYLTRANSFERASE"/>
    <property type="match status" value="1"/>
</dbReference>
<dbReference type="PANTHER" id="PTHR43648:SF1">
    <property type="entry name" value="ELECTRON TRANSFER FLAVOPROTEIN BETA SUBUNIT LYSINE METHYLTRANSFERASE"/>
    <property type="match status" value="1"/>
</dbReference>
<dbReference type="Pfam" id="PF06325">
    <property type="entry name" value="PrmA"/>
    <property type="match status" value="1"/>
</dbReference>
<dbReference type="PIRSF" id="PIRSF000401">
    <property type="entry name" value="RPL11_MTase"/>
    <property type="match status" value="1"/>
</dbReference>
<dbReference type="SUPFAM" id="SSF53335">
    <property type="entry name" value="S-adenosyl-L-methionine-dependent methyltransferases"/>
    <property type="match status" value="1"/>
</dbReference>
<name>PRMA_CAMJD</name>
<sequence length="282" mass="32405">MQKKYYELFFIVEEQYKNLFLGFAFDLGIEAIEEKDNGIYIRSHESLEELSWALEIFAQKLTTTFNLNHKIISNLSLVEKENKDWIQEYKKGIKPILVDNVYIHTTWQEEKKNCINIKINPALAFGSGHHESTHSCVKFLQKFSKSKLRALDLGCGSGILGIIMAKFGCNVEICDTDELAIDSSLENARLNGVDFHKAWCGSIDKANGLYNLIVANIIADVILILEKDIKNHLEDNAILILSGILDKYSTRIKEKFQDLELIDEMQINEWCSFVYKNNKKDK</sequence>
<keyword id="KW-0963">Cytoplasm</keyword>
<keyword id="KW-0489">Methyltransferase</keyword>
<keyword id="KW-0949">S-adenosyl-L-methionine</keyword>
<keyword id="KW-0808">Transferase</keyword>
<proteinExistence type="inferred from homology"/>
<protein>
    <recommendedName>
        <fullName evidence="1">Ribosomal protein L11 methyltransferase</fullName>
        <shortName evidence="1">L11 Mtase</shortName>
        <ecNumber evidence="1">2.1.1.-</ecNumber>
    </recommendedName>
</protein>
<accession>A7H2P1</accession>
<feature type="chain" id="PRO_1000192597" description="Ribosomal protein L11 methyltransferase">
    <location>
        <begin position="1"/>
        <end position="282"/>
    </location>
</feature>
<feature type="binding site" evidence="1">
    <location>
        <position position="133"/>
    </location>
    <ligand>
        <name>S-adenosyl-L-methionine</name>
        <dbReference type="ChEBI" id="CHEBI:59789"/>
    </ligand>
</feature>
<feature type="binding site" evidence="1">
    <location>
        <position position="154"/>
    </location>
    <ligand>
        <name>S-adenosyl-L-methionine</name>
        <dbReference type="ChEBI" id="CHEBI:59789"/>
    </ligand>
</feature>
<feature type="binding site" evidence="1">
    <location>
        <position position="175"/>
    </location>
    <ligand>
        <name>S-adenosyl-L-methionine</name>
        <dbReference type="ChEBI" id="CHEBI:59789"/>
    </ligand>
</feature>
<feature type="binding site" evidence="1">
    <location>
        <position position="216"/>
    </location>
    <ligand>
        <name>S-adenosyl-L-methionine</name>
        <dbReference type="ChEBI" id="CHEBI:59789"/>
    </ligand>
</feature>
<comment type="function">
    <text evidence="1">Methylates ribosomal protein L11.</text>
</comment>
<comment type="catalytic activity">
    <reaction evidence="1">
        <text>L-lysyl-[protein] + 3 S-adenosyl-L-methionine = N(6),N(6),N(6)-trimethyl-L-lysyl-[protein] + 3 S-adenosyl-L-homocysteine + 3 H(+)</text>
        <dbReference type="Rhea" id="RHEA:54192"/>
        <dbReference type="Rhea" id="RHEA-COMP:9752"/>
        <dbReference type="Rhea" id="RHEA-COMP:13826"/>
        <dbReference type="ChEBI" id="CHEBI:15378"/>
        <dbReference type="ChEBI" id="CHEBI:29969"/>
        <dbReference type="ChEBI" id="CHEBI:57856"/>
        <dbReference type="ChEBI" id="CHEBI:59789"/>
        <dbReference type="ChEBI" id="CHEBI:61961"/>
    </reaction>
</comment>
<comment type="subcellular location">
    <subcellularLocation>
        <location evidence="1">Cytoplasm</location>
    </subcellularLocation>
</comment>
<comment type="similarity">
    <text evidence="1">Belongs to the methyltransferase superfamily. PrmA family.</text>
</comment>
<reference key="1">
    <citation type="submission" date="2007-07" db="EMBL/GenBank/DDBJ databases">
        <title>Complete genome sequence of Campylobacter jejuni subsp doylei 269.97 isolated from human blood.</title>
        <authorList>
            <person name="Fouts D.E."/>
            <person name="Mongodin E.F."/>
            <person name="Puiu D."/>
            <person name="Sebastian Y."/>
            <person name="Miller W.G."/>
            <person name="Mandrell R.E."/>
            <person name="Lastovica A.J."/>
            <person name="Nelson K.E."/>
        </authorList>
    </citation>
    <scope>NUCLEOTIDE SEQUENCE [LARGE SCALE GENOMIC DNA]</scope>
    <source>
        <strain>ATCC BAA-1458 / RM4099 / 269.97</strain>
    </source>
</reference>